<comment type="function">
    <text evidence="2">GTP hydrolase that promotes the GTP-dependent binding of aminoacyl-tRNA to the A-site of ribosomes during protein biosynthesis.</text>
</comment>
<comment type="catalytic activity">
    <reaction evidence="2">
        <text>GTP + H2O = GDP + phosphate + H(+)</text>
        <dbReference type="Rhea" id="RHEA:19669"/>
        <dbReference type="ChEBI" id="CHEBI:15377"/>
        <dbReference type="ChEBI" id="CHEBI:15378"/>
        <dbReference type="ChEBI" id="CHEBI:37565"/>
        <dbReference type="ChEBI" id="CHEBI:43474"/>
        <dbReference type="ChEBI" id="CHEBI:58189"/>
        <dbReference type="EC" id="3.6.5.3"/>
    </reaction>
    <physiologicalReaction direction="left-to-right" evidence="2">
        <dbReference type="Rhea" id="RHEA:19670"/>
    </physiologicalReaction>
</comment>
<comment type="subunit">
    <text evidence="2">Monomer.</text>
</comment>
<comment type="subcellular location">
    <subcellularLocation>
        <location evidence="2">Cytoplasm</location>
    </subcellularLocation>
</comment>
<comment type="similarity">
    <text evidence="2">Belongs to the TRAFAC class translation factor GTPase superfamily. Classic translation factor GTPase family. EF-Tu/EF-1A subfamily.</text>
</comment>
<evidence type="ECO:0000250" key="1"/>
<evidence type="ECO:0000255" key="2">
    <source>
        <dbReference type="HAMAP-Rule" id="MF_00118"/>
    </source>
</evidence>
<accession>B1LBP2</accession>
<dbReference type="EC" id="3.6.5.3" evidence="2"/>
<dbReference type="EMBL" id="CP000969">
    <property type="protein sequence ID" value="ACB09740.1"/>
    <property type="molecule type" value="Genomic_DNA"/>
</dbReference>
<dbReference type="RefSeq" id="WP_011943784.1">
    <property type="nucleotide sequence ID" value="NC_010483.1"/>
</dbReference>
<dbReference type="SMR" id="B1LBP2"/>
<dbReference type="KEGG" id="trq:TRQ2_1396"/>
<dbReference type="HOGENOM" id="CLU_007265_0_1_0"/>
<dbReference type="Proteomes" id="UP000001687">
    <property type="component" value="Chromosome"/>
</dbReference>
<dbReference type="GO" id="GO:0005829">
    <property type="term" value="C:cytosol"/>
    <property type="evidence" value="ECO:0007669"/>
    <property type="project" value="TreeGrafter"/>
</dbReference>
<dbReference type="GO" id="GO:0005525">
    <property type="term" value="F:GTP binding"/>
    <property type="evidence" value="ECO:0007669"/>
    <property type="project" value="UniProtKB-UniRule"/>
</dbReference>
<dbReference type="GO" id="GO:0003924">
    <property type="term" value="F:GTPase activity"/>
    <property type="evidence" value="ECO:0007669"/>
    <property type="project" value="InterPro"/>
</dbReference>
<dbReference type="GO" id="GO:0003746">
    <property type="term" value="F:translation elongation factor activity"/>
    <property type="evidence" value="ECO:0007669"/>
    <property type="project" value="UniProtKB-UniRule"/>
</dbReference>
<dbReference type="CDD" id="cd01884">
    <property type="entry name" value="EF_Tu"/>
    <property type="match status" value="1"/>
</dbReference>
<dbReference type="CDD" id="cd03697">
    <property type="entry name" value="EFTU_II"/>
    <property type="match status" value="1"/>
</dbReference>
<dbReference type="CDD" id="cd03707">
    <property type="entry name" value="EFTU_III"/>
    <property type="match status" value="1"/>
</dbReference>
<dbReference type="FunFam" id="2.40.30.10:FF:000001">
    <property type="entry name" value="Elongation factor Tu"/>
    <property type="match status" value="1"/>
</dbReference>
<dbReference type="FunFam" id="3.40.50.300:FF:000003">
    <property type="entry name" value="Elongation factor Tu"/>
    <property type="match status" value="1"/>
</dbReference>
<dbReference type="Gene3D" id="3.40.50.300">
    <property type="entry name" value="P-loop containing nucleotide triphosphate hydrolases"/>
    <property type="match status" value="1"/>
</dbReference>
<dbReference type="Gene3D" id="2.40.30.10">
    <property type="entry name" value="Translation factors"/>
    <property type="match status" value="2"/>
</dbReference>
<dbReference type="HAMAP" id="MF_00118_B">
    <property type="entry name" value="EF_Tu_B"/>
    <property type="match status" value="1"/>
</dbReference>
<dbReference type="InterPro" id="IPR041709">
    <property type="entry name" value="EF-Tu_GTP-bd"/>
</dbReference>
<dbReference type="InterPro" id="IPR050055">
    <property type="entry name" value="EF-Tu_GTPase"/>
</dbReference>
<dbReference type="InterPro" id="IPR004161">
    <property type="entry name" value="EFTu-like_2"/>
</dbReference>
<dbReference type="InterPro" id="IPR033720">
    <property type="entry name" value="EFTU_2"/>
</dbReference>
<dbReference type="InterPro" id="IPR031157">
    <property type="entry name" value="G_TR_CS"/>
</dbReference>
<dbReference type="InterPro" id="IPR027417">
    <property type="entry name" value="P-loop_NTPase"/>
</dbReference>
<dbReference type="InterPro" id="IPR005225">
    <property type="entry name" value="Small_GTP-bd"/>
</dbReference>
<dbReference type="InterPro" id="IPR000795">
    <property type="entry name" value="T_Tr_GTP-bd_dom"/>
</dbReference>
<dbReference type="InterPro" id="IPR009000">
    <property type="entry name" value="Transl_B-barrel_sf"/>
</dbReference>
<dbReference type="InterPro" id="IPR009001">
    <property type="entry name" value="Transl_elong_EF1A/Init_IF2_C"/>
</dbReference>
<dbReference type="InterPro" id="IPR004541">
    <property type="entry name" value="Transl_elong_EFTu/EF1A_bac/org"/>
</dbReference>
<dbReference type="InterPro" id="IPR004160">
    <property type="entry name" value="Transl_elong_EFTu/EF1A_C"/>
</dbReference>
<dbReference type="NCBIfam" id="TIGR00485">
    <property type="entry name" value="EF-Tu"/>
    <property type="match status" value="1"/>
</dbReference>
<dbReference type="NCBIfam" id="NF000766">
    <property type="entry name" value="PRK00049.1"/>
    <property type="match status" value="1"/>
</dbReference>
<dbReference type="NCBIfam" id="NF009372">
    <property type="entry name" value="PRK12735.1"/>
    <property type="match status" value="1"/>
</dbReference>
<dbReference type="NCBIfam" id="NF009373">
    <property type="entry name" value="PRK12736.1"/>
    <property type="match status" value="1"/>
</dbReference>
<dbReference type="NCBIfam" id="TIGR00231">
    <property type="entry name" value="small_GTP"/>
    <property type="match status" value="1"/>
</dbReference>
<dbReference type="PANTHER" id="PTHR43721:SF22">
    <property type="entry name" value="ELONGATION FACTOR TU, MITOCHONDRIAL"/>
    <property type="match status" value="1"/>
</dbReference>
<dbReference type="PANTHER" id="PTHR43721">
    <property type="entry name" value="ELONGATION FACTOR TU-RELATED"/>
    <property type="match status" value="1"/>
</dbReference>
<dbReference type="Pfam" id="PF00009">
    <property type="entry name" value="GTP_EFTU"/>
    <property type="match status" value="1"/>
</dbReference>
<dbReference type="Pfam" id="PF03144">
    <property type="entry name" value="GTP_EFTU_D2"/>
    <property type="match status" value="1"/>
</dbReference>
<dbReference type="Pfam" id="PF03143">
    <property type="entry name" value="GTP_EFTU_D3"/>
    <property type="match status" value="1"/>
</dbReference>
<dbReference type="PRINTS" id="PR00315">
    <property type="entry name" value="ELONGATNFCT"/>
</dbReference>
<dbReference type="SUPFAM" id="SSF50465">
    <property type="entry name" value="EF-Tu/eEF-1alpha/eIF2-gamma C-terminal domain"/>
    <property type="match status" value="1"/>
</dbReference>
<dbReference type="SUPFAM" id="SSF52540">
    <property type="entry name" value="P-loop containing nucleoside triphosphate hydrolases"/>
    <property type="match status" value="1"/>
</dbReference>
<dbReference type="SUPFAM" id="SSF50447">
    <property type="entry name" value="Translation proteins"/>
    <property type="match status" value="1"/>
</dbReference>
<dbReference type="PROSITE" id="PS00301">
    <property type="entry name" value="G_TR_1"/>
    <property type="match status" value="1"/>
</dbReference>
<dbReference type="PROSITE" id="PS51722">
    <property type="entry name" value="G_TR_2"/>
    <property type="match status" value="1"/>
</dbReference>
<feature type="chain" id="PRO_1000095095" description="Elongation factor Tu">
    <location>
        <begin position="1"/>
        <end position="400"/>
    </location>
</feature>
<feature type="domain" description="tr-type G">
    <location>
        <begin position="10"/>
        <end position="208"/>
    </location>
</feature>
<feature type="region of interest" description="G1" evidence="1">
    <location>
        <begin position="19"/>
        <end position="26"/>
    </location>
</feature>
<feature type="region of interest" description="G2" evidence="1">
    <location>
        <begin position="60"/>
        <end position="64"/>
    </location>
</feature>
<feature type="region of interest" description="G3" evidence="1">
    <location>
        <begin position="81"/>
        <end position="84"/>
    </location>
</feature>
<feature type="region of interest" description="G4" evidence="1">
    <location>
        <begin position="136"/>
        <end position="139"/>
    </location>
</feature>
<feature type="region of interest" description="G5" evidence="1">
    <location>
        <begin position="174"/>
        <end position="176"/>
    </location>
</feature>
<feature type="binding site" evidence="2">
    <location>
        <begin position="19"/>
        <end position="26"/>
    </location>
    <ligand>
        <name>GTP</name>
        <dbReference type="ChEBI" id="CHEBI:37565"/>
    </ligand>
</feature>
<feature type="binding site" evidence="2">
    <location>
        <position position="26"/>
    </location>
    <ligand>
        <name>Mg(2+)</name>
        <dbReference type="ChEBI" id="CHEBI:18420"/>
    </ligand>
</feature>
<feature type="binding site" evidence="2">
    <location>
        <begin position="81"/>
        <end position="85"/>
    </location>
    <ligand>
        <name>GTP</name>
        <dbReference type="ChEBI" id="CHEBI:37565"/>
    </ligand>
</feature>
<feature type="binding site" evidence="2">
    <location>
        <begin position="136"/>
        <end position="139"/>
    </location>
    <ligand>
        <name>GTP</name>
        <dbReference type="ChEBI" id="CHEBI:37565"/>
    </ligand>
</feature>
<reference key="1">
    <citation type="journal article" date="2011" name="J. Bacteriol.">
        <title>Genome sequence of Thermotoga sp. strain RQ2, a hyperthermophilic bacterium isolated from a geothermally heated region of the seafloor near Ribeira Quente, the Azores.</title>
        <authorList>
            <person name="Swithers K.S."/>
            <person name="DiPippo J.L."/>
            <person name="Bruce D.C."/>
            <person name="Detter C."/>
            <person name="Tapia R."/>
            <person name="Han S."/>
            <person name="Saunders E."/>
            <person name="Goodwin L.A."/>
            <person name="Han J."/>
            <person name="Woyke T."/>
            <person name="Pitluck S."/>
            <person name="Pennacchio L."/>
            <person name="Nolan M."/>
            <person name="Mikhailova N."/>
            <person name="Lykidis A."/>
            <person name="Land M.L."/>
            <person name="Brettin T."/>
            <person name="Stetter K.O."/>
            <person name="Nelson K.E."/>
            <person name="Gogarten J.P."/>
            <person name="Noll K.M."/>
        </authorList>
    </citation>
    <scope>NUCLEOTIDE SEQUENCE [LARGE SCALE GENOMIC DNA]</scope>
    <source>
        <strain>RQ2</strain>
    </source>
</reference>
<gene>
    <name evidence="2" type="primary">tuf</name>
    <name type="ordered locus">TRQ2_1396</name>
</gene>
<protein>
    <recommendedName>
        <fullName evidence="2">Elongation factor Tu</fullName>
        <shortName evidence="2">EF-Tu</shortName>
        <ecNumber evidence="2">3.6.5.3</ecNumber>
    </recommendedName>
</protein>
<keyword id="KW-0963">Cytoplasm</keyword>
<keyword id="KW-0251">Elongation factor</keyword>
<keyword id="KW-0342">GTP-binding</keyword>
<keyword id="KW-0378">Hydrolase</keyword>
<keyword id="KW-0460">Magnesium</keyword>
<keyword id="KW-0479">Metal-binding</keyword>
<keyword id="KW-0547">Nucleotide-binding</keyword>
<keyword id="KW-0648">Protein biosynthesis</keyword>
<proteinExistence type="inferred from homology"/>
<organism>
    <name type="scientific">Thermotoga sp. (strain RQ2)</name>
    <dbReference type="NCBI Taxonomy" id="126740"/>
    <lineage>
        <taxon>Bacteria</taxon>
        <taxon>Thermotogati</taxon>
        <taxon>Thermotogota</taxon>
        <taxon>Thermotogae</taxon>
        <taxon>Thermotogales</taxon>
        <taxon>Thermotogaceae</taxon>
        <taxon>Thermotoga</taxon>
    </lineage>
</organism>
<sequence>MAKEKFVRTKPHVNVGTIGHIDHGKSTLTAAITKYLSLKGLAQYVPYDQIDKAPEEKARGITINITHVEYQTEKRHYAHIDCPGHADYIKNMITGAAQMDGAILVVAATDGPMPQTREHVLLARQVEVPYMIVFINKTDMVDDPELIDLVEMEVRDLLSQYGYPGDEVPVIRGSALKAVEAPNDPNHEAYKPIQELLDAMDNYIPEPQREVDKPFLMPIEDVFSITGRGTVVTGRIERGRIKPGDEVEIIGLSYEIRKTVVTSVEMFRKELDEGIAGDNVGCLLRGIDKDEVERGQVLAAPGSIKPHKRFKAQVYVLKKEEGGRHTPFTKGYKPQFYIRTADVTGEIVGLPEGVEMVMPGDHVEMEIELIYPVAIEKGQRFAVREGGRTVGAGVVTEVIE</sequence>
<name>EFTU_THESQ</name>